<feature type="chain" id="PRO_0000238157" description="Phosphoglycolate phosphatase">
    <location>
        <begin position="1"/>
        <end position="234"/>
    </location>
</feature>
<feature type="active site" description="Nucleophile" evidence="1">
    <location>
        <position position="13"/>
    </location>
</feature>
<feature type="binding site" evidence="1">
    <location>
        <position position="13"/>
    </location>
    <ligand>
        <name>Mg(2+)</name>
        <dbReference type="ChEBI" id="CHEBI:18420"/>
    </ligand>
</feature>
<feature type="binding site" evidence="1">
    <location>
        <position position="15"/>
    </location>
    <ligand>
        <name>Mg(2+)</name>
        <dbReference type="ChEBI" id="CHEBI:18420"/>
    </ligand>
</feature>
<feature type="binding site" evidence="1">
    <location>
        <position position="175"/>
    </location>
    <ligand>
        <name>Mg(2+)</name>
        <dbReference type="ChEBI" id="CHEBI:18420"/>
    </ligand>
</feature>
<comment type="function">
    <text evidence="1">Specifically catalyzes the dephosphorylation of 2-phosphoglycolate. Is involved in the dissimilation of the intracellular 2-phosphoglycolate formed during the DNA repair of 3'-phosphoglycolate ends, a major class of DNA lesions induced by oxidative stress.</text>
</comment>
<comment type="catalytic activity">
    <reaction evidence="1">
        <text>2-phosphoglycolate + H2O = glycolate + phosphate</text>
        <dbReference type="Rhea" id="RHEA:14369"/>
        <dbReference type="ChEBI" id="CHEBI:15377"/>
        <dbReference type="ChEBI" id="CHEBI:29805"/>
        <dbReference type="ChEBI" id="CHEBI:43474"/>
        <dbReference type="ChEBI" id="CHEBI:58033"/>
        <dbReference type="EC" id="3.1.3.18"/>
    </reaction>
</comment>
<comment type="cofactor">
    <cofactor evidence="1">
        <name>Mg(2+)</name>
        <dbReference type="ChEBI" id="CHEBI:18420"/>
    </cofactor>
</comment>
<comment type="cofactor">
    <cofactor evidence="1">
        <name>chloride</name>
        <dbReference type="ChEBI" id="CHEBI:17996"/>
    </cofactor>
</comment>
<comment type="pathway">
    <text evidence="1">Organic acid metabolism; glycolate biosynthesis; glycolate from 2-phosphoglycolate: step 1/1.</text>
</comment>
<comment type="subunit">
    <text evidence="1">Monomer.</text>
</comment>
<comment type="similarity">
    <text evidence="1">Belongs to the HAD-like hydrolase superfamily. CbbY/CbbZ/Gph/YieH family.</text>
</comment>
<name>GPH_PECAS</name>
<protein>
    <recommendedName>
        <fullName evidence="1">Phosphoglycolate phosphatase</fullName>
        <shortName evidence="1">PGP</shortName>
        <shortName evidence="1">PGPase</shortName>
        <ecNumber evidence="1">3.1.3.18</ecNumber>
    </recommendedName>
</protein>
<accession>Q6CZR3</accession>
<reference key="1">
    <citation type="journal article" date="2004" name="Proc. Natl. Acad. Sci. U.S.A.">
        <title>Genome sequence of the enterobacterial phytopathogen Erwinia carotovora subsp. atroseptica and characterization of virulence factors.</title>
        <authorList>
            <person name="Bell K.S."/>
            <person name="Sebaihia M."/>
            <person name="Pritchard L."/>
            <person name="Holden M.T.G."/>
            <person name="Hyman L.J."/>
            <person name="Holeva M.C."/>
            <person name="Thomson N.R."/>
            <person name="Bentley S.D."/>
            <person name="Churcher L.J.C."/>
            <person name="Mungall K."/>
            <person name="Atkin R."/>
            <person name="Bason N."/>
            <person name="Brooks K."/>
            <person name="Chillingworth T."/>
            <person name="Clark K."/>
            <person name="Doggett J."/>
            <person name="Fraser A."/>
            <person name="Hance Z."/>
            <person name="Hauser H."/>
            <person name="Jagels K."/>
            <person name="Moule S."/>
            <person name="Norbertczak H."/>
            <person name="Ormond D."/>
            <person name="Price C."/>
            <person name="Quail M.A."/>
            <person name="Sanders M."/>
            <person name="Walker D."/>
            <person name="Whitehead S."/>
            <person name="Salmond G.P.C."/>
            <person name="Birch P.R.J."/>
            <person name="Parkhill J."/>
            <person name="Toth I.K."/>
        </authorList>
    </citation>
    <scope>NUCLEOTIDE SEQUENCE [LARGE SCALE GENOMIC DNA]</scope>
    <source>
        <strain>SCRI 1043 / ATCC BAA-672</strain>
    </source>
</reference>
<keyword id="KW-0119">Carbohydrate metabolism</keyword>
<keyword id="KW-0868">Chloride</keyword>
<keyword id="KW-0378">Hydrolase</keyword>
<keyword id="KW-0460">Magnesium</keyword>
<keyword id="KW-0479">Metal-binding</keyword>
<keyword id="KW-1185">Reference proteome</keyword>
<organism>
    <name type="scientific">Pectobacterium atrosepticum (strain SCRI 1043 / ATCC BAA-672)</name>
    <name type="common">Erwinia carotovora subsp. atroseptica</name>
    <dbReference type="NCBI Taxonomy" id="218491"/>
    <lineage>
        <taxon>Bacteria</taxon>
        <taxon>Pseudomonadati</taxon>
        <taxon>Pseudomonadota</taxon>
        <taxon>Gammaproteobacteria</taxon>
        <taxon>Enterobacterales</taxon>
        <taxon>Pectobacteriaceae</taxon>
        <taxon>Pectobacterium</taxon>
    </lineage>
</organism>
<sequence length="234" mass="24799">MAELTAIRGLAFDLDGTLIHSAPGLAAAIDQALVAQSLPAAGESRVATWIGNGADVMVERALRWAGVEPTAARVQETRERFDSYYAQTVDSGSTLFLQVKETLAQLAQQGVPMAVVTNKPTPFVAPLLAGLGIGDYFSLIIGGDDVIVKKPHPAPLYLVLGKLGLRASELLFVGDSRNDIQAAQAAGCRSVGMTYGYNYGEAIELSQPDVVLDRFADILPLIGHSSSHNQEPLV</sequence>
<gene>
    <name type="ordered locus">ECA4088</name>
</gene>
<dbReference type="EC" id="3.1.3.18" evidence="1"/>
<dbReference type="EMBL" id="BX950851">
    <property type="protein sequence ID" value="CAG76985.1"/>
    <property type="molecule type" value="Genomic_DNA"/>
</dbReference>
<dbReference type="RefSeq" id="WP_011095562.1">
    <property type="nucleotide sequence ID" value="NC_004547.2"/>
</dbReference>
<dbReference type="SMR" id="Q6CZR3"/>
<dbReference type="STRING" id="218491.ECA4088"/>
<dbReference type="KEGG" id="eca:ECA4088"/>
<dbReference type="PATRIC" id="fig|218491.5.peg.4158"/>
<dbReference type="eggNOG" id="COG0546">
    <property type="taxonomic scope" value="Bacteria"/>
</dbReference>
<dbReference type="HOGENOM" id="CLU_045011_19_1_6"/>
<dbReference type="OrthoDB" id="9776368at2"/>
<dbReference type="UniPathway" id="UPA00865">
    <property type="reaction ID" value="UER00834"/>
</dbReference>
<dbReference type="Proteomes" id="UP000007966">
    <property type="component" value="Chromosome"/>
</dbReference>
<dbReference type="GO" id="GO:0005829">
    <property type="term" value="C:cytosol"/>
    <property type="evidence" value="ECO:0007669"/>
    <property type="project" value="TreeGrafter"/>
</dbReference>
<dbReference type="GO" id="GO:0046872">
    <property type="term" value="F:metal ion binding"/>
    <property type="evidence" value="ECO:0007669"/>
    <property type="project" value="UniProtKB-KW"/>
</dbReference>
<dbReference type="GO" id="GO:0008967">
    <property type="term" value="F:phosphoglycolate phosphatase activity"/>
    <property type="evidence" value="ECO:0007669"/>
    <property type="project" value="UniProtKB-UniRule"/>
</dbReference>
<dbReference type="GO" id="GO:0005975">
    <property type="term" value="P:carbohydrate metabolic process"/>
    <property type="evidence" value="ECO:0007669"/>
    <property type="project" value="InterPro"/>
</dbReference>
<dbReference type="GO" id="GO:0006281">
    <property type="term" value="P:DNA repair"/>
    <property type="evidence" value="ECO:0007669"/>
    <property type="project" value="TreeGrafter"/>
</dbReference>
<dbReference type="GO" id="GO:0046295">
    <property type="term" value="P:glycolate biosynthetic process"/>
    <property type="evidence" value="ECO:0007669"/>
    <property type="project" value="UniProtKB-UniRule"/>
</dbReference>
<dbReference type="CDD" id="cd16417">
    <property type="entry name" value="HAD_PGPase"/>
    <property type="match status" value="1"/>
</dbReference>
<dbReference type="FunFam" id="3.40.50.1000:FF:000022">
    <property type="entry name" value="Phosphoglycolate phosphatase"/>
    <property type="match status" value="1"/>
</dbReference>
<dbReference type="Gene3D" id="3.40.50.1000">
    <property type="entry name" value="HAD superfamily/HAD-like"/>
    <property type="match status" value="1"/>
</dbReference>
<dbReference type="Gene3D" id="1.10.150.240">
    <property type="entry name" value="Putative phosphatase, domain 2"/>
    <property type="match status" value="1"/>
</dbReference>
<dbReference type="HAMAP" id="MF_00495">
    <property type="entry name" value="GPH_hydrolase_bact"/>
    <property type="match status" value="1"/>
</dbReference>
<dbReference type="InterPro" id="IPR050155">
    <property type="entry name" value="HAD-like_hydrolase_sf"/>
</dbReference>
<dbReference type="InterPro" id="IPR036412">
    <property type="entry name" value="HAD-like_sf"/>
</dbReference>
<dbReference type="InterPro" id="IPR006439">
    <property type="entry name" value="HAD-SF_hydro_IA"/>
</dbReference>
<dbReference type="InterPro" id="IPR041492">
    <property type="entry name" value="HAD_2"/>
</dbReference>
<dbReference type="InterPro" id="IPR023214">
    <property type="entry name" value="HAD_sf"/>
</dbReference>
<dbReference type="InterPro" id="IPR023198">
    <property type="entry name" value="PGP-like_dom2"/>
</dbReference>
<dbReference type="InterPro" id="IPR037512">
    <property type="entry name" value="PGPase_prok"/>
</dbReference>
<dbReference type="NCBIfam" id="TIGR01549">
    <property type="entry name" value="HAD-SF-IA-v1"/>
    <property type="match status" value="1"/>
</dbReference>
<dbReference type="NCBIfam" id="TIGR01509">
    <property type="entry name" value="HAD-SF-IA-v3"/>
    <property type="match status" value="1"/>
</dbReference>
<dbReference type="NCBIfam" id="TIGR01449">
    <property type="entry name" value="PGP_bact"/>
    <property type="match status" value="1"/>
</dbReference>
<dbReference type="NCBIfam" id="NF009695">
    <property type="entry name" value="PRK13222.1-2"/>
    <property type="match status" value="1"/>
</dbReference>
<dbReference type="NCBIfam" id="NF009697">
    <property type="entry name" value="PRK13222.1-4"/>
    <property type="match status" value="1"/>
</dbReference>
<dbReference type="PANTHER" id="PTHR43434">
    <property type="entry name" value="PHOSPHOGLYCOLATE PHOSPHATASE"/>
    <property type="match status" value="1"/>
</dbReference>
<dbReference type="PANTHER" id="PTHR43434:SF1">
    <property type="entry name" value="PHOSPHOGLYCOLATE PHOSPHATASE"/>
    <property type="match status" value="1"/>
</dbReference>
<dbReference type="Pfam" id="PF13419">
    <property type="entry name" value="HAD_2"/>
    <property type="match status" value="1"/>
</dbReference>
<dbReference type="PRINTS" id="PR00413">
    <property type="entry name" value="HADHALOGNASE"/>
</dbReference>
<dbReference type="SFLD" id="SFLDG01135">
    <property type="entry name" value="C1.5.6:_HAD__Beta-PGM__Phospha"/>
    <property type="match status" value="1"/>
</dbReference>
<dbReference type="SFLD" id="SFLDG01129">
    <property type="entry name" value="C1.5:_HAD__Beta-PGM__Phosphata"/>
    <property type="match status" value="1"/>
</dbReference>
<dbReference type="SUPFAM" id="SSF56784">
    <property type="entry name" value="HAD-like"/>
    <property type="match status" value="1"/>
</dbReference>
<evidence type="ECO:0000255" key="1">
    <source>
        <dbReference type="HAMAP-Rule" id="MF_00495"/>
    </source>
</evidence>
<proteinExistence type="inferred from homology"/>